<reference key="1">
    <citation type="journal article" date="1997" name="Microbiology">
        <title>A 23.4 kb segment at the 69 degrees-70 degrees region of the Bacillus subtilis genome.</title>
        <authorList>
            <person name="Yamamoto H."/>
            <person name="Uchiyama S."/>
            <person name="Nugroho F.A."/>
            <person name="Sekiguchi J."/>
        </authorList>
    </citation>
    <scope>NUCLEOTIDE SEQUENCE [GENOMIC DNA]</scope>
    <source>
        <strain>168 / AC327</strain>
    </source>
</reference>
<reference key="2">
    <citation type="journal article" date="1997" name="Nature">
        <title>The complete genome sequence of the Gram-positive bacterium Bacillus subtilis.</title>
        <authorList>
            <person name="Kunst F."/>
            <person name="Ogasawara N."/>
            <person name="Moszer I."/>
            <person name="Albertini A.M."/>
            <person name="Alloni G."/>
            <person name="Azevedo V."/>
            <person name="Bertero M.G."/>
            <person name="Bessieres P."/>
            <person name="Bolotin A."/>
            <person name="Borchert S."/>
            <person name="Borriss R."/>
            <person name="Boursier L."/>
            <person name="Brans A."/>
            <person name="Braun M."/>
            <person name="Brignell S.C."/>
            <person name="Bron S."/>
            <person name="Brouillet S."/>
            <person name="Bruschi C.V."/>
            <person name="Caldwell B."/>
            <person name="Capuano V."/>
            <person name="Carter N.M."/>
            <person name="Choi S.-K."/>
            <person name="Codani J.-J."/>
            <person name="Connerton I.F."/>
            <person name="Cummings N.J."/>
            <person name="Daniel R.A."/>
            <person name="Denizot F."/>
            <person name="Devine K.M."/>
            <person name="Duesterhoeft A."/>
            <person name="Ehrlich S.D."/>
            <person name="Emmerson P.T."/>
            <person name="Entian K.-D."/>
            <person name="Errington J."/>
            <person name="Fabret C."/>
            <person name="Ferrari E."/>
            <person name="Foulger D."/>
            <person name="Fritz C."/>
            <person name="Fujita M."/>
            <person name="Fujita Y."/>
            <person name="Fuma S."/>
            <person name="Galizzi A."/>
            <person name="Galleron N."/>
            <person name="Ghim S.-Y."/>
            <person name="Glaser P."/>
            <person name="Goffeau A."/>
            <person name="Golightly E.J."/>
            <person name="Grandi G."/>
            <person name="Guiseppi G."/>
            <person name="Guy B.J."/>
            <person name="Haga K."/>
            <person name="Haiech J."/>
            <person name="Harwood C.R."/>
            <person name="Henaut A."/>
            <person name="Hilbert H."/>
            <person name="Holsappel S."/>
            <person name="Hosono S."/>
            <person name="Hullo M.-F."/>
            <person name="Itaya M."/>
            <person name="Jones L.-M."/>
            <person name="Joris B."/>
            <person name="Karamata D."/>
            <person name="Kasahara Y."/>
            <person name="Klaerr-Blanchard M."/>
            <person name="Klein C."/>
            <person name="Kobayashi Y."/>
            <person name="Koetter P."/>
            <person name="Koningstein G."/>
            <person name="Krogh S."/>
            <person name="Kumano M."/>
            <person name="Kurita K."/>
            <person name="Lapidus A."/>
            <person name="Lardinois S."/>
            <person name="Lauber J."/>
            <person name="Lazarevic V."/>
            <person name="Lee S.-M."/>
            <person name="Levine A."/>
            <person name="Liu H."/>
            <person name="Masuda S."/>
            <person name="Mauel C."/>
            <person name="Medigue C."/>
            <person name="Medina N."/>
            <person name="Mellado R.P."/>
            <person name="Mizuno M."/>
            <person name="Moestl D."/>
            <person name="Nakai S."/>
            <person name="Noback M."/>
            <person name="Noone D."/>
            <person name="O'Reilly M."/>
            <person name="Ogawa K."/>
            <person name="Ogiwara A."/>
            <person name="Oudega B."/>
            <person name="Park S.-H."/>
            <person name="Parro V."/>
            <person name="Pohl T.M."/>
            <person name="Portetelle D."/>
            <person name="Porwollik S."/>
            <person name="Prescott A.M."/>
            <person name="Presecan E."/>
            <person name="Pujic P."/>
            <person name="Purnelle B."/>
            <person name="Rapoport G."/>
            <person name="Rey M."/>
            <person name="Reynolds S."/>
            <person name="Rieger M."/>
            <person name="Rivolta C."/>
            <person name="Rocha E."/>
            <person name="Roche B."/>
            <person name="Rose M."/>
            <person name="Sadaie Y."/>
            <person name="Sato T."/>
            <person name="Scanlan E."/>
            <person name="Schleich S."/>
            <person name="Schroeter R."/>
            <person name="Scoffone F."/>
            <person name="Sekiguchi J."/>
            <person name="Sekowska A."/>
            <person name="Seror S.J."/>
            <person name="Serror P."/>
            <person name="Shin B.-S."/>
            <person name="Soldo B."/>
            <person name="Sorokin A."/>
            <person name="Tacconi E."/>
            <person name="Takagi T."/>
            <person name="Takahashi H."/>
            <person name="Takemaru K."/>
            <person name="Takeuchi M."/>
            <person name="Tamakoshi A."/>
            <person name="Tanaka T."/>
            <person name="Terpstra P."/>
            <person name="Tognoni A."/>
            <person name="Tosato V."/>
            <person name="Uchiyama S."/>
            <person name="Vandenbol M."/>
            <person name="Vannier F."/>
            <person name="Vassarotti A."/>
            <person name="Viari A."/>
            <person name="Wambutt R."/>
            <person name="Wedler E."/>
            <person name="Wedler H."/>
            <person name="Weitzenegger T."/>
            <person name="Winters P."/>
            <person name="Wipat A."/>
            <person name="Yamamoto H."/>
            <person name="Yamane K."/>
            <person name="Yasumoto K."/>
            <person name="Yata K."/>
            <person name="Yoshida K."/>
            <person name="Yoshikawa H.-F."/>
            <person name="Zumstein E."/>
            <person name="Yoshikawa H."/>
            <person name="Danchin A."/>
        </authorList>
    </citation>
    <scope>NUCLEOTIDE SEQUENCE [LARGE SCALE GENOMIC DNA]</scope>
    <source>
        <strain>168</strain>
    </source>
</reference>
<protein>
    <recommendedName>
        <fullName>Uncharacterized protein YfmN</fullName>
    </recommendedName>
</protein>
<feature type="chain" id="PRO_0000049540" description="Uncharacterized protein YfmN">
    <location>
        <begin position="1"/>
        <end position="51"/>
    </location>
</feature>
<gene>
    <name type="primary">yfmN</name>
    <name type="ordered locus">BSU07410</name>
</gene>
<proteinExistence type="predicted"/>
<sequence length="51" mass="5924">MDKAKPDEYDQKCLETLYQYIHSVMKNSFSRSSGLPLGKMRRILSCLPKES</sequence>
<keyword id="KW-1185">Reference proteome</keyword>
<name>YFMN_BACSU</name>
<dbReference type="EMBL" id="D86417">
    <property type="protein sequence ID" value="BAA22328.1"/>
    <property type="molecule type" value="Genomic_DNA"/>
</dbReference>
<dbReference type="EMBL" id="D86418">
    <property type="protein sequence ID" value="BAA20103.1"/>
    <property type="molecule type" value="Genomic_DNA"/>
</dbReference>
<dbReference type="EMBL" id="AL009126">
    <property type="protein sequence ID" value="CAB12560.1"/>
    <property type="molecule type" value="Genomic_DNA"/>
</dbReference>
<dbReference type="PIR" id="E69813">
    <property type="entry name" value="E69813"/>
</dbReference>
<dbReference type="RefSeq" id="NP_388622.1">
    <property type="nucleotide sequence ID" value="NC_000964.3"/>
</dbReference>
<dbReference type="RefSeq" id="WP_010886440.1">
    <property type="nucleotide sequence ID" value="NZ_OZ025638.1"/>
</dbReference>
<dbReference type="SMR" id="O06472"/>
<dbReference type="FunCoup" id="O06472">
    <property type="interactions" value="149"/>
</dbReference>
<dbReference type="STRING" id="224308.BSU07410"/>
<dbReference type="PaxDb" id="224308-BSU07410"/>
<dbReference type="EnsemblBacteria" id="CAB12560">
    <property type="protein sequence ID" value="CAB12560"/>
    <property type="gene ID" value="BSU_07410"/>
</dbReference>
<dbReference type="GeneID" id="938796"/>
<dbReference type="KEGG" id="bsu:BSU07410"/>
<dbReference type="InParanoid" id="O06472"/>
<dbReference type="OrthoDB" id="9860641at2"/>
<dbReference type="BioCyc" id="BSUB:BSU07410-MONOMER"/>
<dbReference type="Proteomes" id="UP000001570">
    <property type="component" value="Chromosome"/>
</dbReference>
<organism>
    <name type="scientific">Bacillus subtilis (strain 168)</name>
    <dbReference type="NCBI Taxonomy" id="224308"/>
    <lineage>
        <taxon>Bacteria</taxon>
        <taxon>Bacillati</taxon>
        <taxon>Bacillota</taxon>
        <taxon>Bacilli</taxon>
        <taxon>Bacillales</taxon>
        <taxon>Bacillaceae</taxon>
        <taxon>Bacillus</taxon>
    </lineage>
</organism>
<accession>O06472</accession>